<name>LEXA_MARMS</name>
<feature type="chain" id="PRO_1000074058" description="LexA repressor">
    <location>
        <begin position="1"/>
        <end position="207"/>
    </location>
</feature>
<feature type="DNA-binding region" description="H-T-H motif" evidence="1">
    <location>
        <begin position="28"/>
        <end position="48"/>
    </location>
</feature>
<feature type="active site" description="For autocatalytic cleavage activity" evidence="1">
    <location>
        <position position="126"/>
    </location>
</feature>
<feature type="active site" description="For autocatalytic cleavage activity" evidence="1">
    <location>
        <position position="163"/>
    </location>
</feature>
<feature type="site" description="Cleavage; by autolysis" evidence="1">
    <location>
        <begin position="91"/>
        <end position="92"/>
    </location>
</feature>
<evidence type="ECO:0000255" key="1">
    <source>
        <dbReference type="HAMAP-Rule" id="MF_00015"/>
    </source>
</evidence>
<keyword id="KW-0068">Autocatalytic cleavage</keyword>
<keyword id="KW-0227">DNA damage</keyword>
<keyword id="KW-0234">DNA repair</keyword>
<keyword id="KW-0235">DNA replication</keyword>
<keyword id="KW-0238">DNA-binding</keyword>
<keyword id="KW-0378">Hydrolase</keyword>
<keyword id="KW-0678">Repressor</keyword>
<keyword id="KW-0742">SOS response</keyword>
<keyword id="KW-0804">Transcription</keyword>
<keyword id="KW-0805">Transcription regulation</keyword>
<gene>
    <name evidence="1" type="primary">lexA</name>
    <name type="ordered locus">Mmwyl1_2117</name>
</gene>
<accession>A6VX60</accession>
<organism>
    <name type="scientific">Marinomonas sp. (strain MWYL1)</name>
    <dbReference type="NCBI Taxonomy" id="400668"/>
    <lineage>
        <taxon>Bacteria</taxon>
        <taxon>Pseudomonadati</taxon>
        <taxon>Pseudomonadota</taxon>
        <taxon>Gammaproteobacteria</taxon>
        <taxon>Oceanospirillales</taxon>
        <taxon>Oceanospirillaceae</taxon>
        <taxon>Marinomonas</taxon>
    </lineage>
</organism>
<dbReference type="EC" id="3.4.21.88" evidence="1"/>
<dbReference type="EMBL" id="CP000749">
    <property type="protein sequence ID" value="ABR71039.1"/>
    <property type="molecule type" value="Genomic_DNA"/>
</dbReference>
<dbReference type="SMR" id="A6VX60"/>
<dbReference type="STRING" id="400668.Mmwyl1_2117"/>
<dbReference type="MEROPS" id="S24.001"/>
<dbReference type="KEGG" id="mmw:Mmwyl1_2117"/>
<dbReference type="eggNOG" id="COG1974">
    <property type="taxonomic scope" value="Bacteria"/>
</dbReference>
<dbReference type="HOGENOM" id="CLU_066192_45_3_6"/>
<dbReference type="OrthoDB" id="9802364at2"/>
<dbReference type="GO" id="GO:0003677">
    <property type="term" value="F:DNA binding"/>
    <property type="evidence" value="ECO:0007669"/>
    <property type="project" value="UniProtKB-UniRule"/>
</dbReference>
<dbReference type="GO" id="GO:0004252">
    <property type="term" value="F:serine-type endopeptidase activity"/>
    <property type="evidence" value="ECO:0007669"/>
    <property type="project" value="UniProtKB-UniRule"/>
</dbReference>
<dbReference type="GO" id="GO:0006281">
    <property type="term" value="P:DNA repair"/>
    <property type="evidence" value="ECO:0007669"/>
    <property type="project" value="UniProtKB-UniRule"/>
</dbReference>
<dbReference type="GO" id="GO:0006260">
    <property type="term" value="P:DNA replication"/>
    <property type="evidence" value="ECO:0007669"/>
    <property type="project" value="UniProtKB-UniRule"/>
</dbReference>
<dbReference type="GO" id="GO:0045892">
    <property type="term" value="P:negative regulation of DNA-templated transcription"/>
    <property type="evidence" value="ECO:0007669"/>
    <property type="project" value="UniProtKB-UniRule"/>
</dbReference>
<dbReference type="GO" id="GO:0006508">
    <property type="term" value="P:proteolysis"/>
    <property type="evidence" value="ECO:0007669"/>
    <property type="project" value="InterPro"/>
</dbReference>
<dbReference type="GO" id="GO:0009432">
    <property type="term" value="P:SOS response"/>
    <property type="evidence" value="ECO:0007669"/>
    <property type="project" value="UniProtKB-UniRule"/>
</dbReference>
<dbReference type="CDD" id="cd06529">
    <property type="entry name" value="S24_LexA-like"/>
    <property type="match status" value="1"/>
</dbReference>
<dbReference type="FunFam" id="1.10.10.10:FF:000009">
    <property type="entry name" value="LexA repressor"/>
    <property type="match status" value="1"/>
</dbReference>
<dbReference type="FunFam" id="2.10.109.10:FF:000001">
    <property type="entry name" value="LexA repressor"/>
    <property type="match status" value="1"/>
</dbReference>
<dbReference type="Gene3D" id="2.10.109.10">
    <property type="entry name" value="Umud Fragment, subunit A"/>
    <property type="match status" value="1"/>
</dbReference>
<dbReference type="Gene3D" id="1.10.10.10">
    <property type="entry name" value="Winged helix-like DNA-binding domain superfamily/Winged helix DNA-binding domain"/>
    <property type="match status" value="1"/>
</dbReference>
<dbReference type="HAMAP" id="MF_00015">
    <property type="entry name" value="LexA"/>
    <property type="match status" value="1"/>
</dbReference>
<dbReference type="InterPro" id="IPR006200">
    <property type="entry name" value="LexA"/>
</dbReference>
<dbReference type="InterPro" id="IPR039418">
    <property type="entry name" value="LexA-like"/>
</dbReference>
<dbReference type="InterPro" id="IPR036286">
    <property type="entry name" value="LexA/Signal_pep-like_sf"/>
</dbReference>
<dbReference type="InterPro" id="IPR006199">
    <property type="entry name" value="LexA_DNA-bd_dom"/>
</dbReference>
<dbReference type="InterPro" id="IPR050077">
    <property type="entry name" value="LexA_repressor"/>
</dbReference>
<dbReference type="InterPro" id="IPR006197">
    <property type="entry name" value="Peptidase_S24_LexA"/>
</dbReference>
<dbReference type="InterPro" id="IPR015927">
    <property type="entry name" value="Peptidase_S24_S26A/B/C"/>
</dbReference>
<dbReference type="InterPro" id="IPR036388">
    <property type="entry name" value="WH-like_DNA-bd_sf"/>
</dbReference>
<dbReference type="InterPro" id="IPR036390">
    <property type="entry name" value="WH_DNA-bd_sf"/>
</dbReference>
<dbReference type="NCBIfam" id="TIGR00498">
    <property type="entry name" value="lexA"/>
    <property type="match status" value="1"/>
</dbReference>
<dbReference type="PANTHER" id="PTHR33516">
    <property type="entry name" value="LEXA REPRESSOR"/>
    <property type="match status" value="1"/>
</dbReference>
<dbReference type="PANTHER" id="PTHR33516:SF2">
    <property type="entry name" value="LEXA REPRESSOR-RELATED"/>
    <property type="match status" value="1"/>
</dbReference>
<dbReference type="Pfam" id="PF01726">
    <property type="entry name" value="LexA_DNA_bind"/>
    <property type="match status" value="1"/>
</dbReference>
<dbReference type="Pfam" id="PF00717">
    <property type="entry name" value="Peptidase_S24"/>
    <property type="match status" value="1"/>
</dbReference>
<dbReference type="PRINTS" id="PR00726">
    <property type="entry name" value="LEXASERPTASE"/>
</dbReference>
<dbReference type="SUPFAM" id="SSF51306">
    <property type="entry name" value="LexA/Signal peptidase"/>
    <property type="match status" value="1"/>
</dbReference>
<dbReference type="SUPFAM" id="SSF46785">
    <property type="entry name" value="Winged helix' DNA-binding domain"/>
    <property type="match status" value="1"/>
</dbReference>
<protein>
    <recommendedName>
        <fullName evidence="1">LexA repressor</fullName>
        <ecNumber evidence="1">3.4.21.88</ecNumber>
    </recommendedName>
</protein>
<comment type="function">
    <text evidence="1">Represses a number of genes involved in the response to DNA damage (SOS response), including recA and lexA. In the presence of single-stranded DNA, RecA interacts with LexA causing an autocatalytic cleavage which disrupts the DNA-binding part of LexA, leading to derepression of the SOS regulon and eventually DNA repair.</text>
</comment>
<comment type="catalytic activity">
    <reaction evidence="1">
        <text>Hydrolysis of Ala-|-Gly bond in repressor LexA.</text>
        <dbReference type="EC" id="3.4.21.88"/>
    </reaction>
</comment>
<comment type="subunit">
    <text evidence="1">Homodimer.</text>
</comment>
<comment type="similarity">
    <text evidence="1">Belongs to the peptidase S24 family.</text>
</comment>
<reference key="1">
    <citation type="submission" date="2007-06" db="EMBL/GenBank/DDBJ databases">
        <title>Complete sequence of Marinomonas sp. MWYL1.</title>
        <authorList>
            <consortium name="US DOE Joint Genome Institute"/>
            <person name="Copeland A."/>
            <person name="Lucas S."/>
            <person name="Lapidus A."/>
            <person name="Barry K."/>
            <person name="Glavina del Rio T."/>
            <person name="Dalin E."/>
            <person name="Tice H."/>
            <person name="Pitluck S."/>
            <person name="Kiss H."/>
            <person name="Brettin T."/>
            <person name="Bruce D."/>
            <person name="Detter J.C."/>
            <person name="Han C."/>
            <person name="Schmutz J."/>
            <person name="Larimer F."/>
            <person name="Land M."/>
            <person name="Hauser L."/>
            <person name="Kyrpides N."/>
            <person name="Kim E."/>
            <person name="Johnston A.W.B."/>
            <person name="Todd J.D."/>
            <person name="Rogers R."/>
            <person name="Wexler M."/>
            <person name="Bond P.L."/>
            <person name="Li Y."/>
            <person name="Richardson P."/>
        </authorList>
    </citation>
    <scope>NUCLEOTIDE SEQUENCE [LARGE SCALE GENOMIC DNA]</scope>
    <source>
        <strain>MWYL1</strain>
    </source>
</reference>
<sequence>MIKLTKRQSDVLETIREFISETGFPPTRAEIARRLGFKSPNAAEEHLKALCKKGAIEMLSGASRGIRLVDRASNDDPTDNLGLPVIGKVAAGYPILAQENIASHVNIPANMFSPQADYFLSVSGTSMKDIGIMEGDLLAVHKTTTVRNGQIVVARIGDEVTVKRFEQKGSIVRLIPENEEFNDIIVDLESEEFAIEGLSVGVIRQGL</sequence>
<proteinExistence type="inferred from homology"/>